<gene>
    <name evidence="1" type="primary">rplV</name>
    <name type="ordered locus">ROP_61910</name>
</gene>
<protein>
    <recommendedName>
        <fullName evidence="1">Large ribosomal subunit protein uL22</fullName>
    </recommendedName>
    <alternativeName>
        <fullName evidence="2">50S ribosomal protein L22</fullName>
    </alternativeName>
</protein>
<keyword id="KW-0687">Ribonucleoprotein</keyword>
<keyword id="KW-0689">Ribosomal protein</keyword>
<keyword id="KW-0694">RNA-binding</keyword>
<keyword id="KW-0699">rRNA-binding</keyword>
<evidence type="ECO:0000255" key="1">
    <source>
        <dbReference type="HAMAP-Rule" id="MF_01331"/>
    </source>
</evidence>
<evidence type="ECO:0000305" key="2"/>
<name>RL22_RHOOB</name>
<dbReference type="EMBL" id="AP011115">
    <property type="protein sequence ID" value="BAH54438.1"/>
    <property type="molecule type" value="Genomic_DNA"/>
</dbReference>
<dbReference type="RefSeq" id="WP_005239634.1">
    <property type="nucleotide sequence ID" value="NC_012522.1"/>
</dbReference>
<dbReference type="SMR" id="C1B017"/>
<dbReference type="STRING" id="632772.ROP_61910"/>
<dbReference type="GeneID" id="69890521"/>
<dbReference type="KEGG" id="rop:ROP_61910"/>
<dbReference type="PATRIC" id="fig|632772.20.peg.6467"/>
<dbReference type="HOGENOM" id="CLU_083987_3_2_11"/>
<dbReference type="OrthoDB" id="9805969at2"/>
<dbReference type="Proteomes" id="UP000002212">
    <property type="component" value="Chromosome"/>
</dbReference>
<dbReference type="GO" id="GO:0022625">
    <property type="term" value="C:cytosolic large ribosomal subunit"/>
    <property type="evidence" value="ECO:0007669"/>
    <property type="project" value="TreeGrafter"/>
</dbReference>
<dbReference type="GO" id="GO:0019843">
    <property type="term" value="F:rRNA binding"/>
    <property type="evidence" value="ECO:0007669"/>
    <property type="project" value="UniProtKB-UniRule"/>
</dbReference>
<dbReference type="GO" id="GO:0003735">
    <property type="term" value="F:structural constituent of ribosome"/>
    <property type="evidence" value="ECO:0007669"/>
    <property type="project" value="InterPro"/>
</dbReference>
<dbReference type="GO" id="GO:0006412">
    <property type="term" value="P:translation"/>
    <property type="evidence" value="ECO:0007669"/>
    <property type="project" value="UniProtKB-UniRule"/>
</dbReference>
<dbReference type="CDD" id="cd00336">
    <property type="entry name" value="Ribosomal_L22"/>
    <property type="match status" value="1"/>
</dbReference>
<dbReference type="FunFam" id="3.90.470.10:FF:000002">
    <property type="entry name" value="50S ribosomal protein L22"/>
    <property type="match status" value="1"/>
</dbReference>
<dbReference type="Gene3D" id="3.90.470.10">
    <property type="entry name" value="Ribosomal protein L22/L17"/>
    <property type="match status" value="1"/>
</dbReference>
<dbReference type="HAMAP" id="MF_01331_B">
    <property type="entry name" value="Ribosomal_uL22_B"/>
    <property type="match status" value="1"/>
</dbReference>
<dbReference type="InterPro" id="IPR001063">
    <property type="entry name" value="Ribosomal_uL22"/>
</dbReference>
<dbReference type="InterPro" id="IPR005727">
    <property type="entry name" value="Ribosomal_uL22_bac/chlpt-type"/>
</dbReference>
<dbReference type="InterPro" id="IPR047867">
    <property type="entry name" value="Ribosomal_uL22_bac/org-type"/>
</dbReference>
<dbReference type="InterPro" id="IPR018260">
    <property type="entry name" value="Ribosomal_uL22_CS"/>
</dbReference>
<dbReference type="InterPro" id="IPR036394">
    <property type="entry name" value="Ribosomal_uL22_sf"/>
</dbReference>
<dbReference type="NCBIfam" id="TIGR01044">
    <property type="entry name" value="rplV_bact"/>
    <property type="match status" value="1"/>
</dbReference>
<dbReference type="PANTHER" id="PTHR13501">
    <property type="entry name" value="CHLOROPLAST 50S RIBOSOMAL PROTEIN L22-RELATED"/>
    <property type="match status" value="1"/>
</dbReference>
<dbReference type="PANTHER" id="PTHR13501:SF8">
    <property type="entry name" value="LARGE RIBOSOMAL SUBUNIT PROTEIN UL22M"/>
    <property type="match status" value="1"/>
</dbReference>
<dbReference type="Pfam" id="PF00237">
    <property type="entry name" value="Ribosomal_L22"/>
    <property type="match status" value="1"/>
</dbReference>
<dbReference type="SUPFAM" id="SSF54843">
    <property type="entry name" value="Ribosomal protein L22"/>
    <property type="match status" value="1"/>
</dbReference>
<dbReference type="PROSITE" id="PS00464">
    <property type="entry name" value="RIBOSOMAL_L22"/>
    <property type="match status" value="1"/>
</dbReference>
<feature type="chain" id="PRO_1000166079" description="Large ribosomal subunit protein uL22">
    <location>
        <begin position="1"/>
        <end position="134"/>
    </location>
</feature>
<proteinExistence type="inferred from homology"/>
<reference key="1">
    <citation type="submission" date="2009-03" db="EMBL/GenBank/DDBJ databases">
        <title>Comparison of the complete genome sequences of Rhodococcus erythropolis PR4 and Rhodococcus opacus B4.</title>
        <authorList>
            <person name="Takarada H."/>
            <person name="Sekine M."/>
            <person name="Hosoyama A."/>
            <person name="Yamada R."/>
            <person name="Fujisawa T."/>
            <person name="Omata S."/>
            <person name="Shimizu A."/>
            <person name="Tsukatani N."/>
            <person name="Tanikawa S."/>
            <person name="Fujita N."/>
            <person name="Harayama S."/>
        </authorList>
    </citation>
    <scope>NUCLEOTIDE SEQUENCE [LARGE SCALE GENOMIC DNA]</scope>
    <source>
        <strain>B4</strain>
    </source>
</reference>
<comment type="function">
    <text evidence="1">This protein binds specifically to 23S rRNA; its binding is stimulated by other ribosomal proteins, e.g. L4, L17, and L20. It is important during the early stages of 50S assembly. It makes multiple contacts with different domains of the 23S rRNA in the assembled 50S subunit and ribosome (By similarity).</text>
</comment>
<comment type="function">
    <text evidence="1">The globular domain of the protein is located near the polypeptide exit tunnel on the outside of the subunit, while an extended beta-hairpin is found that lines the wall of the exit tunnel in the center of the 70S ribosome.</text>
</comment>
<comment type="subunit">
    <text evidence="1">Part of the 50S ribosomal subunit.</text>
</comment>
<comment type="similarity">
    <text evidence="1">Belongs to the universal ribosomal protein uL22 family.</text>
</comment>
<accession>C1B017</accession>
<sequence>MSNTETANPTAKAVARHVRVTPMKARRVVDLVRGRSVEDALNILKFAPQAASEPVAKVIASAAANAENNLDLDPSTLVVATAFVDEGATLKRFQPRAQGRAFRIRKRTSHITVIVESLPKTGTSTRNRRKGSAQ</sequence>
<organism>
    <name type="scientific">Rhodococcus opacus (strain B4)</name>
    <dbReference type="NCBI Taxonomy" id="632772"/>
    <lineage>
        <taxon>Bacteria</taxon>
        <taxon>Bacillati</taxon>
        <taxon>Actinomycetota</taxon>
        <taxon>Actinomycetes</taxon>
        <taxon>Mycobacteriales</taxon>
        <taxon>Nocardiaceae</taxon>
        <taxon>Rhodococcus</taxon>
    </lineage>
</organism>